<name>SODM_MYCLP</name>
<accession>O86165</accession>
<comment type="function">
    <text>Destroys superoxide anion radicals which are normally produced within the cells and which are toxic to biological systems.</text>
</comment>
<comment type="catalytic activity">
    <reaction>
        <text>2 superoxide + 2 H(+) = H2O2 + O2</text>
        <dbReference type="Rhea" id="RHEA:20696"/>
        <dbReference type="ChEBI" id="CHEBI:15378"/>
        <dbReference type="ChEBI" id="CHEBI:15379"/>
        <dbReference type="ChEBI" id="CHEBI:16240"/>
        <dbReference type="ChEBI" id="CHEBI:18421"/>
        <dbReference type="EC" id="1.15.1.1"/>
    </reaction>
</comment>
<comment type="cofactor">
    <cofactor evidence="1">
        <name>Mn(2+)</name>
        <dbReference type="ChEBI" id="CHEBI:29035"/>
    </cofactor>
    <text evidence="1">Binds 1 Mn(2+) ion per subunit.</text>
</comment>
<comment type="similarity">
    <text evidence="2">Belongs to the iron/manganese superoxide dismutase family.</text>
</comment>
<protein>
    <recommendedName>
        <fullName>Superoxide dismutase [Mn]</fullName>
        <ecNumber>1.15.1.1</ecNumber>
    </recommendedName>
</protein>
<evidence type="ECO:0000250" key="1"/>
<evidence type="ECO:0000305" key="2"/>
<sequence length="207" mass="23162">MAEYTLPDLDWDYEALEPHISGQINEIHHTKHHATYVKGVNDALAKLEEARANEDHAAIFLNEKNLAFHLGGHVNHSLWWKNLSPDGGDKPTGELAAAIDDAFGSFDKFRAQFSAAANGLQGSGWAVLGYDTLGSRLLTFQLYDQQANVPLGIIPLLQVDMWEHAFYLQYKNVKADYVKAFWNVVNWADVQKRYTAATSKTQGLIFG</sequence>
<proteinExistence type="inferred from homology"/>
<organism>
    <name type="scientific">Mycobacterium lepraemurium</name>
    <dbReference type="NCBI Taxonomy" id="64667"/>
    <lineage>
        <taxon>Bacteria</taxon>
        <taxon>Bacillati</taxon>
        <taxon>Actinomycetota</taxon>
        <taxon>Actinomycetes</taxon>
        <taxon>Mycobacteriales</taxon>
        <taxon>Mycobacteriaceae</taxon>
        <taxon>Mycobacterium</taxon>
        <taxon>Mycobacterium avium complex (MAC)</taxon>
    </lineage>
</organism>
<dbReference type="EC" id="1.15.1.1"/>
<dbReference type="EMBL" id="D13288">
    <property type="protein sequence ID" value="BAA28850.1"/>
    <property type="molecule type" value="Genomic_DNA"/>
</dbReference>
<dbReference type="SMR" id="O86165"/>
<dbReference type="KEGG" id="mlp:MLM_0123"/>
<dbReference type="GO" id="GO:0046872">
    <property type="term" value="F:metal ion binding"/>
    <property type="evidence" value="ECO:0007669"/>
    <property type="project" value="UniProtKB-KW"/>
</dbReference>
<dbReference type="GO" id="GO:0004784">
    <property type="term" value="F:superoxide dismutase activity"/>
    <property type="evidence" value="ECO:0007669"/>
    <property type="project" value="UniProtKB-EC"/>
</dbReference>
<dbReference type="FunFam" id="1.10.287.990:FF:000001">
    <property type="entry name" value="Superoxide dismutase"/>
    <property type="match status" value="1"/>
</dbReference>
<dbReference type="FunFam" id="3.55.40.20:FF:000004">
    <property type="entry name" value="Superoxide dismutase [Fe]"/>
    <property type="match status" value="1"/>
</dbReference>
<dbReference type="Gene3D" id="1.10.287.990">
    <property type="entry name" value="Fe,Mn superoxide dismutase (SOD) domain"/>
    <property type="match status" value="1"/>
</dbReference>
<dbReference type="Gene3D" id="3.55.40.20">
    <property type="entry name" value="Iron/manganese superoxide dismutase, C-terminal domain"/>
    <property type="match status" value="1"/>
</dbReference>
<dbReference type="InterPro" id="IPR050265">
    <property type="entry name" value="Fe/Mn_Superoxide_Dismutase"/>
</dbReference>
<dbReference type="InterPro" id="IPR001189">
    <property type="entry name" value="Mn/Fe_SOD"/>
</dbReference>
<dbReference type="InterPro" id="IPR019833">
    <property type="entry name" value="Mn/Fe_SOD_BS"/>
</dbReference>
<dbReference type="InterPro" id="IPR019832">
    <property type="entry name" value="Mn/Fe_SOD_C"/>
</dbReference>
<dbReference type="InterPro" id="IPR019831">
    <property type="entry name" value="Mn/Fe_SOD_N"/>
</dbReference>
<dbReference type="InterPro" id="IPR036324">
    <property type="entry name" value="Mn/Fe_SOD_N_sf"/>
</dbReference>
<dbReference type="InterPro" id="IPR036314">
    <property type="entry name" value="SOD_C_sf"/>
</dbReference>
<dbReference type="PANTHER" id="PTHR11404">
    <property type="entry name" value="SUPEROXIDE DISMUTASE 2"/>
    <property type="match status" value="1"/>
</dbReference>
<dbReference type="PANTHER" id="PTHR11404:SF6">
    <property type="entry name" value="SUPEROXIDE DISMUTASE [MN], MITOCHONDRIAL"/>
    <property type="match status" value="1"/>
</dbReference>
<dbReference type="Pfam" id="PF02777">
    <property type="entry name" value="Sod_Fe_C"/>
    <property type="match status" value="1"/>
</dbReference>
<dbReference type="Pfam" id="PF00081">
    <property type="entry name" value="Sod_Fe_N"/>
    <property type="match status" value="1"/>
</dbReference>
<dbReference type="PIRSF" id="PIRSF000349">
    <property type="entry name" value="SODismutase"/>
    <property type="match status" value="1"/>
</dbReference>
<dbReference type="PRINTS" id="PR01703">
    <property type="entry name" value="MNSODISMTASE"/>
</dbReference>
<dbReference type="SUPFAM" id="SSF54719">
    <property type="entry name" value="Fe,Mn superoxide dismutase (SOD), C-terminal domain"/>
    <property type="match status" value="1"/>
</dbReference>
<dbReference type="SUPFAM" id="SSF46609">
    <property type="entry name" value="Fe,Mn superoxide dismutase (SOD), N-terminal domain"/>
    <property type="match status" value="1"/>
</dbReference>
<dbReference type="PROSITE" id="PS00088">
    <property type="entry name" value="SOD_MN"/>
    <property type="match status" value="1"/>
</dbReference>
<keyword id="KW-0464">Manganese</keyword>
<keyword id="KW-0479">Metal-binding</keyword>
<keyword id="KW-0560">Oxidoreductase</keyword>
<gene>
    <name type="primary">sodA</name>
    <name type="synonym">sod</name>
</gene>
<feature type="initiator methionine" description="Removed" evidence="1">
    <location>
        <position position="1"/>
    </location>
</feature>
<feature type="chain" id="PRO_0000160053" description="Superoxide dismutase [Mn]">
    <location>
        <begin position="2"/>
        <end position="207"/>
    </location>
</feature>
<feature type="binding site" evidence="1">
    <location>
        <position position="28"/>
    </location>
    <ligand>
        <name>Mn(2+)</name>
        <dbReference type="ChEBI" id="CHEBI:29035"/>
    </ligand>
</feature>
<feature type="binding site" evidence="1">
    <location>
        <position position="76"/>
    </location>
    <ligand>
        <name>Mn(2+)</name>
        <dbReference type="ChEBI" id="CHEBI:29035"/>
    </ligand>
</feature>
<feature type="binding site" evidence="1">
    <location>
        <position position="160"/>
    </location>
    <ligand>
        <name>Mn(2+)</name>
        <dbReference type="ChEBI" id="CHEBI:29035"/>
    </ligand>
</feature>
<feature type="binding site" evidence="1">
    <location>
        <position position="164"/>
    </location>
    <ligand>
        <name>Mn(2+)</name>
        <dbReference type="ChEBI" id="CHEBI:29035"/>
    </ligand>
</feature>
<reference key="1">
    <citation type="submission" date="1992-09" db="EMBL/GenBank/DDBJ databases">
        <authorList>
            <person name="Nakamura M."/>
        </authorList>
    </citation>
    <scope>NUCLEOTIDE SEQUENCE [GENOMIC DNA]</scope>
    <source>
        <strain>Hawaiian</strain>
    </source>
</reference>